<sequence>MSSNKINKKSIARIAAVQAIYQNILQNNDDMDDIMQNVLSFYQNNNSITDLPENLKISLSISHFKMLVKSVFENIHKLDEIIDNHLTNDKDPAHMPILLRALLRVSICELLFCPTTPAKVVINEYTDIANDMLNEHEIGFVNSVLDKIAKEHIRLI</sequence>
<organism>
    <name type="scientific">Rickettsia africae (strain ESF-5)</name>
    <dbReference type="NCBI Taxonomy" id="347255"/>
    <lineage>
        <taxon>Bacteria</taxon>
        <taxon>Pseudomonadati</taxon>
        <taxon>Pseudomonadota</taxon>
        <taxon>Alphaproteobacteria</taxon>
        <taxon>Rickettsiales</taxon>
        <taxon>Rickettsiaceae</taxon>
        <taxon>Rickettsieae</taxon>
        <taxon>Rickettsia</taxon>
        <taxon>spotted fever group</taxon>
    </lineage>
</organism>
<reference key="1">
    <citation type="journal article" date="2009" name="BMC Genomics">
        <title>Analysis of the Rickettsia africae genome reveals that virulence acquisition in Rickettsia species may be explained by genome reduction.</title>
        <authorList>
            <person name="Fournier P.-E."/>
            <person name="El Karkouri K."/>
            <person name="Leroy Q."/>
            <person name="Robert C."/>
            <person name="Giumelli B."/>
            <person name="Renesto P."/>
            <person name="Socolovschi C."/>
            <person name="Parola P."/>
            <person name="Audic S."/>
            <person name="Raoult D."/>
        </authorList>
    </citation>
    <scope>NUCLEOTIDE SEQUENCE [LARGE SCALE GENOMIC DNA]</scope>
    <source>
        <strain>ESF-5</strain>
    </source>
</reference>
<dbReference type="EMBL" id="CP001612">
    <property type="protein sequence ID" value="ACP53162.1"/>
    <property type="molecule type" value="Genomic_DNA"/>
</dbReference>
<dbReference type="RefSeq" id="WP_004996600.1">
    <property type="nucleotide sequence ID" value="NC_012633.1"/>
</dbReference>
<dbReference type="SMR" id="C3PMK2"/>
<dbReference type="GeneID" id="95361917"/>
<dbReference type="KEGG" id="raf:RAF_ORF0195"/>
<dbReference type="HOGENOM" id="CLU_087843_4_3_5"/>
<dbReference type="Proteomes" id="UP000002305">
    <property type="component" value="Chromosome"/>
</dbReference>
<dbReference type="GO" id="GO:0005829">
    <property type="term" value="C:cytosol"/>
    <property type="evidence" value="ECO:0007669"/>
    <property type="project" value="TreeGrafter"/>
</dbReference>
<dbReference type="GO" id="GO:0003723">
    <property type="term" value="F:RNA binding"/>
    <property type="evidence" value="ECO:0007669"/>
    <property type="project" value="UniProtKB-UniRule"/>
</dbReference>
<dbReference type="GO" id="GO:0006353">
    <property type="term" value="P:DNA-templated transcription termination"/>
    <property type="evidence" value="ECO:0007669"/>
    <property type="project" value="UniProtKB-UniRule"/>
</dbReference>
<dbReference type="GO" id="GO:0031564">
    <property type="term" value="P:transcription antitermination"/>
    <property type="evidence" value="ECO:0007669"/>
    <property type="project" value="UniProtKB-KW"/>
</dbReference>
<dbReference type="CDD" id="cd00619">
    <property type="entry name" value="Terminator_NusB"/>
    <property type="match status" value="1"/>
</dbReference>
<dbReference type="Gene3D" id="1.10.940.10">
    <property type="entry name" value="NusB-like"/>
    <property type="match status" value="1"/>
</dbReference>
<dbReference type="HAMAP" id="MF_00073">
    <property type="entry name" value="NusB"/>
    <property type="match status" value="1"/>
</dbReference>
<dbReference type="InterPro" id="IPR035926">
    <property type="entry name" value="NusB-like_sf"/>
</dbReference>
<dbReference type="InterPro" id="IPR011605">
    <property type="entry name" value="NusB_fam"/>
</dbReference>
<dbReference type="InterPro" id="IPR006027">
    <property type="entry name" value="NusB_RsmB_TIM44"/>
</dbReference>
<dbReference type="NCBIfam" id="TIGR01951">
    <property type="entry name" value="nusB"/>
    <property type="match status" value="1"/>
</dbReference>
<dbReference type="PANTHER" id="PTHR11078:SF3">
    <property type="entry name" value="ANTITERMINATION NUSB DOMAIN-CONTAINING PROTEIN"/>
    <property type="match status" value="1"/>
</dbReference>
<dbReference type="PANTHER" id="PTHR11078">
    <property type="entry name" value="N UTILIZATION SUBSTANCE PROTEIN B-RELATED"/>
    <property type="match status" value="1"/>
</dbReference>
<dbReference type="Pfam" id="PF01029">
    <property type="entry name" value="NusB"/>
    <property type="match status" value="1"/>
</dbReference>
<dbReference type="SUPFAM" id="SSF48013">
    <property type="entry name" value="NusB-like"/>
    <property type="match status" value="1"/>
</dbReference>
<gene>
    <name evidence="1" type="primary">nusB</name>
    <name type="ordered locus">RAF_ORF0195</name>
</gene>
<evidence type="ECO:0000255" key="1">
    <source>
        <dbReference type="HAMAP-Rule" id="MF_00073"/>
    </source>
</evidence>
<keyword id="KW-0694">RNA-binding</keyword>
<keyword id="KW-0804">Transcription</keyword>
<keyword id="KW-0889">Transcription antitermination</keyword>
<keyword id="KW-0805">Transcription regulation</keyword>
<feature type="chain" id="PRO_1000202489" description="Transcription antitermination protein NusB">
    <location>
        <begin position="1"/>
        <end position="156"/>
    </location>
</feature>
<comment type="function">
    <text evidence="1">Involved in transcription antitermination. Required for transcription of ribosomal RNA (rRNA) genes. Binds specifically to the boxA antiterminator sequence of the ribosomal RNA (rrn) operons.</text>
</comment>
<comment type="similarity">
    <text evidence="1">Belongs to the NusB family.</text>
</comment>
<protein>
    <recommendedName>
        <fullName evidence="1">Transcription antitermination protein NusB</fullName>
    </recommendedName>
    <alternativeName>
        <fullName evidence="1">Antitermination factor NusB</fullName>
    </alternativeName>
</protein>
<accession>C3PMK2</accession>
<proteinExistence type="inferred from homology"/>
<name>NUSB_RICAE</name>